<keyword id="KW-0997">Cell inner membrane</keyword>
<keyword id="KW-1003">Cell membrane</keyword>
<keyword id="KW-0472">Membrane</keyword>
<keyword id="KW-1185">Reference proteome</keyword>
<keyword id="KW-0812">Transmembrane</keyword>
<keyword id="KW-1133">Transmembrane helix</keyword>
<keyword id="KW-0813">Transport</keyword>
<proteinExistence type="inferred from homology"/>
<reference key="1">
    <citation type="journal article" date="1995" name="Science">
        <title>Whole-genome random sequencing and assembly of Haemophilus influenzae Rd.</title>
        <authorList>
            <person name="Fleischmann R.D."/>
            <person name="Adams M.D."/>
            <person name="White O."/>
            <person name="Clayton R.A."/>
            <person name="Kirkness E.F."/>
            <person name="Kerlavage A.R."/>
            <person name="Bult C.J."/>
            <person name="Tomb J.-F."/>
            <person name="Dougherty B.A."/>
            <person name="Merrick J.M."/>
            <person name="McKenney K."/>
            <person name="Sutton G.G."/>
            <person name="FitzHugh W."/>
            <person name="Fields C.A."/>
            <person name="Gocayne J.D."/>
            <person name="Scott J.D."/>
            <person name="Shirley R."/>
            <person name="Liu L.-I."/>
            <person name="Glodek A."/>
            <person name="Kelley J.M."/>
            <person name="Weidman J.F."/>
            <person name="Phillips C.A."/>
            <person name="Spriggs T."/>
            <person name="Hedblom E."/>
            <person name="Cotton M.D."/>
            <person name="Utterback T.R."/>
            <person name="Hanna M.C."/>
            <person name="Nguyen D.T."/>
            <person name="Saudek D.M."/>
            <person name="Brandon R.C."/>
            <person name="Fine L.D."/>
            <person name="Fritchman J.L."/>
            <person name="Fuhrmann J.L."/>
            <person name="Geoghagen N.S.M."/>
            <person name="Gnehm C.L."/>
            <person name="McDonald L.A."/>
            <person name="Small K.V."/>
            <person name="Fraser C.M."/>
            <person name="Smith H.O."/>
            <person name="Venter J.C."/>
        </authorList>
    </citation>
    <scope>NUCLEOTIDE SEQUENCE [LARGE SCALE GENOMIC DNA]</scope>
    <source>
        <strain>ATCC 51907 / DSM 11121 / KW20 / Rd</strain>
    </source>
</reference>
<gene>
    <name type="ordered locus">HI_0862</name>
</gene>
<name>QPTR_HAEIN</name>
<protein>
    <recommendedName>
        <fullName evidence="1">Probable queuosine precursor transporter</fullName>
        <shortName evidence="1">Q precursor transporter</shortName>
    </recommendedName>
</protein>
<comment type="function">
    <text evidence="1">Involved in the import of queuosine (Q) precursors, required for Q precursor salvage.</text>
</comment>
<comment type="subcellular location">
    <subcellularLocation>
        <location evidence="1">Cell inner membrane</location>
        <topology evidence="1">Multi-pass membrane protein</topology>
    </subcellularLocation>
</comment>
<comment type="similarity">
    <text evidence="1 2">Belongs to the vitamin uptake transporter (VUT/ECF) (TC 2.A.88) family. Q precursor transporter subfamily.</text>
</comment>
<feature type="chain" id="PRO_0000169557" description="Probable queuosine precursor transporter">
    <location>
        <begin position="1"/>
        <end position="235"/>
    </location>
</feature>
<feature type="transmembrane region" description="Helical" evidence="1">
    <location>
        <begin position="17"/>
        <end position="37"/>
    </location>
</feature>
<feature type="transmembrane region" description="Helical" evidence="1">
    <location>
        <begin position="56"/>
        <end position="76"/>
    </location>
</feature>
<feature type="transmembrane region" description="Helical" evidence="1">
    <location>
        <begin position="87"/>
        <end position="107"/>
    </location>
</feature>
<feature type="transmembrane region" description="Helical" evidence="1">
    <location>
        <begin position="127"/>
        <end position="147"/>
    </location>
</feature>
<feature type="transmembrane region" description="Helical" evidence="1">
    <location>
        <begin position="155"/>
        <end position="175"/>
    </location>
</feature>
<feature type="transmembrane region" description="Helical" evidence="1">
    <location>
        <begin position="201"/>
        <end position="221"/>
    </location>
</feature>
<organism>
    <name type="scientific">Haemophilus influenzae (strain ATCC 51907 / DSM 11121 / KW20 / Rd)</name>
    <dbReference type="NCBI Taxonomy" id="71421"/>
    <lineage>
        <taxon>Bacteria</taxon>
        <taxon>Pseudomonadati</taxon>
        <taxon>Pseudomonadota</taxon>
        <taxon>Gammaproteobacteria</taxon>
        <taxon>Pasteurellales</taxon>
        <taxon>Pasteurellaceae</taxon>
        <taxon>Haemophilus</taxon>
    </lineage>
</organism>
<dbReference type="EMBL" id="L42023">
    <property type="protein sequence ID" value="AAC22521.1"/>
    <property type="molecule type" value="Genomic_DNA"/>
</dbReference>
<dbReference type="PIR" id="F64160">
    <property type="entry name" value="F64160"/>
</dbReference>
<dbReference type="RefSeq" id="NP_439022.1">
    <property type="nucleotide sequence ID" value="NC_000907.1"/>
</dbReference>
<dbReference type="STRING" id="71421.HI_0862"/>
<dbReference type="EnsemblBacteria" id="AAC22521">
    <property type="protein sequence ID" value="AAC22521"/>
    <property type="gene ID" value="HI_0862"/>
</dbReference>
<dbReference type="KEGG" id="hin:HI_0862"/>
<dbReference type="PATRIC" id="fig|71421.8.peg.903"/>
<dbReference type="eggNOG" id="COG1738">
    <property type="taxonomic scope" value="Bacteria"/>
</dbReference>
<dbReference type="HOGENOM" id="CLU_090905_0_0_6"/>
<dbReference type="OrthoDB" id="7065604at2"/>
<dbReference type="PhylomeDB" id="P44908"/>
<dbReference type="BioCyc" id="HINF71421:G1GJ1-903-MONOMER"/>
<dbReference type="Proteomes" id="UP000000579">
    <property type="component" value="Chromosome"/>
</dbReference>
<dbReference type="GO" id="GO:0005886">
    <property type="term" value="C:plasma membrane"/>
    <property type="evidence" value="ECO:0000318"/>
    <property type="project" value="GO_Central"/>
</dbReference>
<dbReference type="GO" id="GO:0022857">
    <property type="term" value="F:transmembrane transporter activity"/>
    <property type="evidence" value="ECO:0007669"/>
    <property type="project" value="UniProtKB-UniRule"/>
</dbReference>
<dbReference type="GO" id="GO:0072531">
    <property type="term" value="P:pyrimidine-containing compound transmembrane transport"/>
    <property type="evidence" value="ECO:0000318"/>
    <property type="project" value="GO_Central"/>
</dbReference>
<dbReference type="GO" id="GO:1990397">
    <property type="term" value="P:queuosine salvage"/>
    <property type="evidence" value="ECO:0007669"/>
    <property type="project" value="UniProtKB-UniRule"/>
</dbReference>
<dbReference type="HAMAP" id="MF_02088">
    <property type="entry name" value="Q_prec_transport"/>
    <property type="match status" value="1"/>
</dbReference>
<dbReference type="InterPro" id="IPR003744">
    <property type="entry name" value="YhhQ"/>
</dbReference>
<dbReference type="NCBIfam" id="NF008406">
    <property type="entry name" value="PRK11212.1"/>
    <property type="match status" value="1"/>
</dbReference>
<dbReference type="NCBIfam" id="TIGR00697">
    <property type="entry name" value="queuosine precursor transporter"/>
    <property type="match status" value="1"/>
</dbReference>
<dbReference type="PANTHER" id="PTHR34300:SF1">
    <property type="entry name" value="QUEUOSINE PRECURSOR TRANSPORTER"/>
    <property type="match status" value="1"/>
</dbReference>
<dbReference type="PANTHER" id="PTHR34300">
    <property type="entry name" value="QUEUOSINE PRECURSOR TRANSPORTER-RELATED"/>
    <property type="match status" value="1"/>
</dbReference>
<dbReference type="Pfam" id="PF02592">
    <property type="entry name" value="Vut_1"/>
    <property type="match status" value="1"/>
</dbReference>
<evidence type="ECO:0000255" key="1">
    <source>
        <dbReference type="HAMAP-Rule" id="MF_02088"/>
    </source>
</evidence>
<evidence type="ECO:0000305" key="2"/>
<accession>P44908</accession>
<sequence>MKLTSPIFNDQQKRRAIIWLSFFHIFIIAASNYFVQIPFEITLKLTALGAANDFSFHSTWGTLTFPFIFLATDLTVRIFGAEDARKIIFVVMFPALIVSYVISVLFSESKFQGFESLTHFDLFVFRIAIASFAAYVVGQLLDVIVFNRLRQLKTWWVAPTSSMTFGSMADTFVFFSIAFYQSADPFMAEHWAQLGFVDYLFKLFIGIILFVPAYGVVLNVILRKLQMLVTERVPA</sequence>